<protein>
    <recommendedName>
        <fullName>Dynactin subunit 6</fullName>
    </recommendedName>
    <alternativeName>
        <fullName>Dynactin subunit p27</fullName>
    </alternativeName>
</protein>
<keyword id="KW-0137">Centromere</keyword>
<keyword id="KW-0158">Chromosome</keyword>
<keyword id="KW-0963">Cytoplasm</keyword>
<keyword id="KW-0206">Cytoskeleton</keyword>
<keyword id="KW-0995">Kinetochore</keyword>
<keyword id="KW-0597">Phosphoprotein</keyword>
<keyword id="KW-1185">Reference proteome</keyword>
<reference key="1">
    <citation type="submission" date="2004-11" db="EMBL/GenBank/DDBJ databases">
        <authorList>
            <consortium name="The German cDNA consortium"/>
        </authorList>
    </citation>
    <scope>NUCLEOTIDE SEQUENCE [LARGE SCALE MRNA]</scope>
    <source>
        <tissue>Kidney</tissue>
    </source>
</reference>
<name>DCTN6_PONAB</name>
<evidence type="ECO:0000250" key="1">
    <source>
        <dbReference type="UniProtKB" id="D0G6S1"/>
    </source>
</evidence>
<evidence type="ECO:0000250" key="2">
    <source>
        <dbReference type="UniProtKB" id="O00399"/>
    </source>
</evidence>
<evidence type="ECO:0000250" key="3">
    <source>
        <dbReference type="UniProtKB" id="Q9WUB4"/>
    </source>
</evidence>
<evidence type="ECO:0000305" key="4"/>
<proteinExistence type="evidence at transcript level"/>
<accession>Q5R7D8</accession>
<organism>
    <name type="scientific">Pongo abelii</name>
    <name type="common">Sumatran orangutan</name>
    <name type="synonym">Pongo pygmaeus abelii</name>
    <dbReference type="NCBI Taxonomy" id="9601"/>
    <lineage>
        <taxon>Eukaryota</taxon>
        <taxon>Metazoa</taxon>
        <taxon>Chordata</taxon>
        <taxon>Craniata</taxon>
        <taxon>Vertebrata</taxon>
        <taxon>Euteleostomi</taxon>
        <taxon>Mammalia</taxon>
        <taxon>Eutheria</taxon>
        <taxon>Euarchontoglires</taxon>
        <taxon>Primates</taxon>
        <taxon>Haplorrhini</taxon>
        <taxon>Catarrhini</taxon>
        <taxon>Hominidae</taxon>
        <taxon>Pongo</taxon>
    </lineage>
</organism>
<gene>
    <name type="primary">DCTN6</name>
</gene>
<comment type="function">
    <text evidence="2">Part of the dynactin complex that activates the molecular motor dynein for ultra-processive transport along microtubules.</text>
</comment>
<comment type="subunit">
    <text evidence="1 2 3">Subunit of dynactin, a multiprotein complex part of a tripartite complex with dynein and a adapter, such as BICDL1, BICD2 or HOOK3. The dynactin complex is built around ACTR1A/ACTB filament and consists of an actin-related filament composed of a shoulder domain, a pointed end and a barbed end. Its length is defined by its flexible shoulder domain. The soulder is composed of 2 DCTN1 subunits, 4 DCTN2 and 2 DCTN3. The 4 DCNT2 (via N-terminus) bind the ACTR1A filament and act as molecular rulers to determine the length. The pointed end is important for binding dynein-dynactin cargo adapters. Consists of 4 subunits: ACTR10, DCNT4, DCTN5 and DCTN6. Within the complex DCTN6 forms a heterodimer with DCTN5 (By similarity). The barbed end is composed of a CAPZA1:CAPZB heterodimers, which binds ACTR1A/ACTB filament and dynactin and stabilizes dynactin (By similarity). Interacts with PLK1 (By similarity). Interacts with N4BP2L1 (By similarity).</text>
</comment>
<comment type="subcellular location">
    <subcellularLocation>
        <location evidence="1">Cytoplasm</location>
        <location evidence="1">Cytoskeleton</location>
    </subcellularLocation>
    <subcellularLocation>
        <location evidence="2">Chromosome</location>
        <location evidence="2">Centromere</location>
        <location evidence="2">Kinetochore</location>
    </subcellularLocation>
</comment>
<comment type="PTM">
    <text evidence="2">Phosphorylation at Thr-186 by CDK1 during mitotic prometaphase creates a binding site for PLK1 that facilitates its recruitment to kinetochores.</text>
</comment>
<comment type="similarity">
    <text evidence="4">Belongs to the dynactin subunits 5/6 family. Dynactin subunit 6 subfamily.</text>
</comment>
<sequence length="190" mass="20713">MAEKTQKSVKIAPGAVVCVESEIRGDVTIGPRTVIHPKARIIAEAGPIVIGEGNLIEEQALIINAYPDNITPDTEDPEPKPMIIGTNNVFEVGCYSQAMKMGDNNVIESKAYVGRNVILTSGCIIGACCNLNTFEVIPENTVIYGADCLRRVQTERPQPQTLQLDLLMKILPNYHHLKKTMKGSSTPVKN</sequence>
<feature type="chain" id="PRO_0000079832" description="Dynactin subunit 6">
    <location>
        <begin position="1"/>
        <end position="190"/>
    </location>
</feature>
<feature type="modified residue" description="Phosphothreonine; by CDK1" evidence="2">
    <location>
        <position position="186"/>
    </location>
</feature>
<dbReference type="EMBL" id="CR860180">
    <property type="protein sequence ID" value="CAH92322.1"/>
    <property type="molecule type" value="mRNA"/>
</dbReference>
<dbReference type="RefSeq" id="NP_001127539.1">
    <property type="nucleotide sequence ID" value="NM_001134067.2"/>
</dbReference>
<dbReference type="SMR" id="Q5R7D8"/>
<dbReference type="STRING" id="9601.ENSPPYP00000020722"/>
<dbReference type="GeneID" id="100174616"/>
<dbReference type="KEGG" id="pon:100174616"/>
<dbReference type="CTD" id="10671"/>
<dbReference type="eggNOG" id="KOG4042">
    <property type="taxonomic scope" value="Eukaryota"/>
</dbReference>
<dbReference type="InParanoid" id="Q5R7D8"/>
<dbReference type="OrthoDB" id="2355at2759"/>
<dbReference type="Proteomes" id="UP000001595">
    <property type="component" value="Unplaced"/>
</dbReference>
<dbReference type="GO" id="GO:0005737">
    <property type="term" value="C:cytoplasm"/>
    <property type="evidence" value="ECO:0007669"/>
    <property type="project" value="UniProtKB-KW"/>
</dbReference>
<dbReference type="GO" id="GO:0005869">
    <property type="term" value="C:dynactin complex"/>
    <property type="evidence" value="ECO:0007669"/>
    <property type="project" value="InterPro"/>
</dbReference>
<dbReference type="GO" id="GO:0000776">
    <property type="term" value="C:kinetochore"/>
    <property type="evidence" value="ECO:0007669"/>
    <property type="project" value="UniProtKB-KW"/>
</dbReference>
<dbReference type="GO" id="GO:0070840">
    <property type="term" value="F:dynein complex binding"/>
    <property type="evidence" value="ECO:0007669"/>
    <property type="project" value="TreeGrafter"/>
</dbReference>
<dbReference type="GO" id="GO:0007052">
    <property type="term" value="P:mitotic spindle organization"/>
    <property type="evidence" value="ECO:0007669"/>
    <property type="project" value="TreeGrafter"/>
</dbReference>
<dbReference type="CDD" id="cd04646">
    <property type="entry name" value="LbH_Dynactin_6"/>
    <property type="match status" value="1"/>
</dbReference>
<dbReference type="FunFam" id="2.160.10.10:FF:000021">
    <property type="entry name" value="dynactin subunit 6"/>
    <property type="match status" value="1"/>
</dbReference>
<dbReference type="Gene3D" id="2.160.10.10">
    <property type="entry name" value="Hexapeptide repeat proteins"/>
    <property type="match status" value="1"/>
</dbReference>
<dbReference type="InterPro" id="IPR027777">
    <property type="entry name" value="DCTN6"/>
</dbReference>
<dbReference type="InterPro" id="IPR011004">
    <property type="entry name" value="Trimer_LpxA-like_sf"/>
</dbReference>
<dbReference type="PANTHER" id="PTHR13072">
    <property type="entry name" value="DYNACTIN 6"/>
    <property type="match status" value="1"/>
</dbReference>
<dbReference type="PANTHER" id="PTHR13072:SF0">
    <property type="entry name" value="DYNACTIN SUBUNIT 6"/>
    <property type="match status" value="1"/>
</dbReference>
<dbReference type="SUPFAM" id="SSF51161">
    <property type="entry name" value="Trimeric LpxA-like enzymes"/>
    <property type="match status" value="1"/>
</dbReference>